<name>RS4_MYCTO</name>
<dbReference type="EMBL" id="AE000516">
    <property type="protein sequence ID" value="AAK47904.1"/>
    <property type="molecule type" value="Genomic_DNA"/>
</dbReference>
<dbReference type="PIR" id="G70565">
    <property type="entry name" value="G70565"/>
</dbReference>
<dbReference type="RefSeq" id="WP_003418354.1">
    <property type="nucleotide sequence ID" value="NZ_KK341227.1"/>
</dbReference>
<dbReference type="SMR" id="P9WH34"/>
<dbReference type="GeneID" id="45427447"/>
<dbReference type="KEGG" id="mtc:MT3565"/>
<dbReference type="PATRIC" id="fig|83331.31.peg.3822"/>
<dbReference type="HOGENOM" id="CLU_092403_0_2_11"/>
<dbReference type="Proteomes" id="UP000001020">
    <property type="component" value="Chromosome"/>
</dbReference>
<dbReference type="GO" id="GO:0015935">
    <property type="term" value="C:small ribosomal subunit"/>
    <property type="evidence" value="ECO:0007669"/>
    <property type="project" value="InterPro"/>
</dbReference>
<dbReference type="GO" id="GO:0019843">
    <property type="term" value="F:rRNA binding"/>
    <property type="evidence" value="ECO:0007669"/>
    <property type="project" value="UniProtKB-UniRule"/>
</dbReference>
<dbReference type="GO" id="GO:0003735">
    <property type="term" value="F:structural constituent of ribosome"/>
    <property type="evidence" value="ECO:0007669"/>
    <property type="project" value="InterPro"/>
</dbReference>
<dbReference type="GO" id="GO:0042274">
    <property type="term" value="P:ribosomal small subunit biogenesis"/>
    <property type="evidence" value="ECO:0007669"/>
    <property type="project" value="TreeGrafter"/>
</dbReference>
<dbReference type="GO" id="GO:0006412">
    <property type="term" value="P:translation"/>
    <property type="evidence" value="ECO:0007669"/>
    <property type="project" value="UniProtKB-UniRule"/>
</dbReference>
<dbReference type="CDD" id="cd00165">
    <property type="entry name" value="S4"/>
    <property type="match status" value="1"/>
</dbReference>
<dbReference type="FunFam" id="3.10.290.10:FF:000001">
    <property type="entry name" value="30S ribosomal protein S4"/>
    <property type="match status" value="1"/>
</dbReference>
<dbReference type="Gene3D" id="1.10.1050.10">
    <property type="entry name" value="Ribosomal Protein S4 Delta 41, Chain A, domain 1"/>
    <property type="match status" value="1"/>
</dbReference>
<dbReference type="Gene3D" id="3.10.290.10">
    <property type="entry name" value="RNA-binding S4 domain"/>
    <property type="match status" value="1"/>
</dbReference>
<dbReference type="HAMAP" id="MF_01306_B">
    <property type="entry name" value="Ribosomal_uS4_B"/>
    <property type="match status" value="1"/>
</dbReference>
<dbReference type="InterPro" id="IPR022801">
    <property type="entry name" value="Ribosomal_uS4"/>
</dbReference>
<dbReference type="InterPro" id="IPR005709">
    <property type="entry name" value="Ribosomal_uS4_bac-type"/>
</dbReference>
<dbReference type="InterPro" id="IPR018079">
    <property type="entry name" value="Ribosomal_uS4_CS"/>
</dbReference>
<dbReference type="InterPro" id="IPR001912">
    <property type="entry name" value="Ribosomal_uS4_N"/>
</dbReference>
<dbReference type="InterPro" id="IPR002942">
    <property type="entry name" value="S4_RNA-bd"/>
</dbReference>
<dbReference type="InterPro" id="IPR036986">
    <property type="entry name" value="S4_RNA-bd_sf"/>
</dbReference>
<dbReference type="NCBIfam" id="NF003717">
    <property type="entry name" value="PRK05327.1"/>
    <property type="match status" value="1"/>
</dbReference>
<dbReference type="NCBIfam" id="TIGR01017">
    <property type="entry name" value="rpsD_bact"/>
    <property type="match status" value="1"/>
</dbReference>
<dbReference type="PANTHER" id="PTHR11831">
    <property type="entry name" value="30S 40S RIBOSOMAL PROTEIN"/>
    <property type="match status" value="1"/>
</dbReference>
<dbReference type="PANTHER" id="PTHR11831:SF4">
    <property type="entry name" value="SMALL RIBOSOMAL SUBUNIT PROTEIN US4M"/>
    <property type="match status" value="1"/>
</dbReference>
<dbReference type="Pfam" id="PF00163">
    <property type="entry name" value="Ribosomal_S4"/>
    <property type="match status" value="1"/>
</dbReference>
<dbReference type="Pfam" id="PF01479">
    <property type="entry name" value="S4"/>
    <property type="match status" value="1"/>
</dbReference>
<dbReference type="SMART" id="SM01390">
    <property type="entry name" value="Ribosomal_S4"/>
    <property type="match status" value="1"/>
</dbReference>
<dbReference type="SMART" id="SM00363">
    <property type="entry name" value="S4"/>
    <property type="match status" value="1"/>
</dbReference>
<dbReference type="SUPFAM" id="SSF55174">
    <property type="entry name" value="Alpha-L RNA-binding motif"/>
    <property type="match status" value="1"/>
</dbReference>
<dbReference type="PROSITE" id="PS00632">
    <property type="entry name" value="RIBOSOMAL_S4"/>
    <property type="match status" value="1"/>
</dbReference>
<dbReference type="PROSITE" id="PS50889">
    <property type="entry name" value="S4"/>
    <property type="match status" value="1"/>
</dbReference>
<sequence>MARYTGPVTRKSRRLRTDLVGGDQAFEKRPYPPGQHGRARIKESEYLLQLQEKQKARFTYGVMEKQFRRYYEEAVRQPGKTGEELLKILESRLDNVIYRAGLARTRRMARQLVSHGHFNVNGVHVNVPSYRVSQYDIVDVRDKSLNTVPFQIARETAGERPIPSWLQVVGERQRVLIHQLPERAQIDVPLTEQLIVEYYSK</sequence>
<keyword id="KW-1185">Reference proteome</keyword>
<keyword id="KW-0687">Ribonucleoprotein</keyword>
<keyword id="KW-0689">Ribosomal protein</keyword>
<keyword id="KW-0694">RNA-binding</keyword>
<keyword id="KW-0699">rRNA-binding</keyword>
<organism>
    <name type="scientific">Mycobacterium tuberculosis (strain CDC 1551 / Oshkosh)</name>
    <dbReference type="NCBI Taxonomy" id="83331"/>
    <lineage>
        <taxon>Bacteria</taxon>
        <taxon>Bacillati</taxon>
        <taxon>Actinomycetota</taxon>
        <taxon>Actinomycetes</taxon>
        <taxon>Mycobacteriales</taxon>
        <taxon>Mycobacteriaceae</taxon>
        <taxon>Mycobacterium</taxon>
        <taxon>Mycobacterium tuberculosis complex</taxon>
    </lineage>
</organism>
<proteinExistence type="inferred from homology"/>
<gene>
    <name evidence="1" type="primary">rpsD</name>
    <name type="ordered locus">MT3565</name>
</gene>
<reference key="1">
    <citation type="journal article" date="2002" name="J. Bacteriol.">
        <title>Whole-genome comparison of Mycobacterium tuberculosis clinical and laboratory strains.</title>
        <authorList>
            <person name="Fleischmann R.D."/>
            <person name="Alland D."/>
            <person name="Eisen J.A."/>
            <person name="Carpenter L."/>
            <person name="White O."/>
            <person name="Peterson J.D."/>
            <person name="DeBoy R.T."/>
            <person name="Dodson R.J."/>
            <person name="Gwinn M.L."/>
            <person name="Haft D.H."/>
            <person name="Hickey E.K."/>
            <person name="Kolonay J.F."/>
            <person name="Nelson W.C."/>
            <person name="Umayam L.A."/>
            <person name="Ermolaeva M.D."/>
            <person name="Salzberg S.L."/>
            <person name="Delcher A."/>
            <person name="Utterback T.R."/>
            <person name="Weidman J.F."/>
            <person name="Khouri H.M."/>
            <person name="Gill J."/>
            <person name="Mikula A."/>
            <person name="Bishai W."/>
            <person name="Jacobs W.R. Jr."/>
            <person name="Venter J.C."/>
            <person name="Fraser C.M."/>
        </authorList>
    </citation>
    <scope>NUCLEOTIDE SEQUENCE [LARGE SCALE GENOMIC DNA]</scope>
    <source>
        <strain>CDC 1551 / Oshkosh</strain>
    </source>
</reference>
<feature type="chain" id="PRO_0000428256" description="Small ribosomal subunit protein uS4">
    <location>
        <begin position="1"/>
        <end position="201"/>
    </location>
</feature>
<feature type="domain" description="S4 RNA-binding" evidence="1">
    <location>
        <begin position="91"/>
        <end position="157"/>
    </location>
</feature>
<accession>P9WH34</accession>
<accession>L0TFP5</accession>
<accession>O06325</accession>
<comment type="function">
    <text evidence="1">One of the primary rRNA binding proteins, it binds directly to 16S rRNA where it nucleates assembly of the body of the 30S subunit.</text>
</comment>
<comment type="function">
    <text evidence="1">With S5 and S12 plays an important role in translational accuracy.</text>
</comment>
<comment type="subunit">
    <text evidence="1">Part of the 30S ribosomal subunit. Contacts protein S5. The interaction surface between S4 and S5 is involved in control of translational fidelity.</text>
</comment>
<comment type="similarity">
    <text evidence="1">Belongs to the universal ribosomal protein uS4 family.</text>
</comment>
<evidence type="ECO:0000255" key="1">
    <source>
        <dbReference type="HAMAP-Rule" id="MF_01306"/>
    </source>
</evidence>
<evidence type="ECO:0000305" key="2"/>
<protein>
    <recommendedName>
        <fullName evidence="1">Small ribosomal subunit protein uS4</fullName>
    </recommendedName>
    <alternativeName>
        <fullName evidence="2">30S ribosomal protein S4</fullName>
    </alternativeName>
</protein>